<proteinExistence type="evidence at transcript level"/>
<sequence>MNISAVFNALLVSIMAAVLWKHVKLLEQFYVIEEELELTRQSQELSQVRIDYQAALQALVEDGTRMVCSGRMHTDRVCRFESLCYSTEAEEFVFFHSNSSIMLPNLGPRRFQPALLDLSSVDDHNTQYFNFIELPAAALKFMPKPVFVPDVALIMNRFNPDNLMHVFHDDLIPIFYTIQQFADLDFESRLFFMEGWNEGLHFELYKFMSNKQPLLKEQLKTLGRLLCFTKSYVGLSKITTWYQYGFVQPQGPKANILVSGNEIRHFAKFMMGKLNITKDQNAAEAYIVLFSRSMNRLIVNEAELLLALAQEFQMKTITVSLEDHSFADIVRLISNATMLVSMHGAQLITSLFLPKGAIVVELFPYGVNPEHYTPYKTLSTLPGMELQYVAWQNTEEENTIAYPNRPWEQGGIVHLDKTEQERIKKSKEVPRHLCCRNPEWLFRIYQDTKVNISSLIQVIKSKTKLGSRRQKWTQGLYPGKVRESKCQASAQGTGEAKLFVSWQIPWNLKFLKVRDVKYEVWIQEQGENSYMPYILSQQNYTFSENIKPLTTYLVWIRCIFNKTLLGPFAEVLVCNT</sequence>
<name>PMGT2_XENTR</name>
<keyword id="KW-0256">Endoplasmic reticulum</keyword>
<keyword id="KW-0325">Glycoprotein</keyword>
<keyword id="KW-0328">Glycosyltransferase</keyword>
<keyword id="KW-0472">Membrane</keyword>
<keyword id="KW-1185">Reference proteome</keyword>
<keyword id="KW-0735">Signal-anchor</keyword>
<keyword id="KW-0808">Transferase</keyword>
<keyword id="KW-0812">Transmembrane</keyword>
<keyword id="KW-1133">Transmembrane helix</keyword>
<reference key="1">
    <citation type="submission" date="2004-12" db="EMBL/GenBank/DDBJ databases">
        <title>Phylogeny of xylosyltransferases.</title>
        <authorList>
            <person name="Kiefer-Meyer M.C."/>
            <person name="Pagny S."/>
            <person name="Durambure G."/>
            <person name="Faye L."/>
            <person name="Gomord V."/>
            <person name="Mollicone R."/>
            <person name="Oriol R."/>
        </authorList>
    </citation>
    <scope>NUCLEOTIDE SEQUENCE [MRNA]</scope>
</reference>
<reference key="2">
    <citation type="submission" date="2006-06" db="EMBL/GenBank/DDBJ databases">
        <authorList>
            <consortium name="Sanger Xenopus tropicalis EST/cDNA project"/>
        </authorList>
    </citation>
    <scope>NUCLEOTIDE SEQUENCE [LARGE SCALE MRNA]</scope>
    <source>
        <tissue>Egg</tissue>
    </source>
</reference>
<reference key="3">
    <citation type="submission" date="2007-03" db="EMBL/GenBank/DDBJ databases">
        <authorList>
            <consortium name="NIH - Xenopus Gene Collection (XGC) project"/>
        </authorList>
    </citation>
    <scope>NUCLEOTIDE SEQUENCE [LARGE SCALE MRNA]</scope>
    <source>
        <tissue>Embryo</tissue>
    </source>
</reference>
<feature type="chain" id="PRO_0000249023" description="Protein O-linked-mannose beta-1,4-N-acetylglucosaminyltransferase 2">
    <location>
        <begin position="1"/>
        <end position="576"/>
    </location>
</feature>
<feature type="topological domain" description="Cytoplasmic" evidence="2">
    <location>
        <begin position="1"/>
        <end position="4"/>
    </location>
</feature>
<feature type="transmembrane region" description="Helical; Signal-anchor for type II membrane protein" evidence="2">
    <location>
        <begin position="5"/>
        <end position="25"/>
    </location>
</feature>
<feature type="topological domain" description="Lumenal" evidence="2">
    <location>
        <begin position="26"/>
        <end position="576"/>
    </location>
</feature>
<feature type="domain" description="Fibronectin type-III" evidence="3">
    <location>
        <begin position="482"/>
        <end position="576"/>
    </location>
</feature>
<feature type="glycosylation site" description="N-linked (GlcNAc...) asparagine" evidence="2">
    <location>
        <position position="98"/>
    </location>
</feature>
<feature type="glycosylation site" description="N-linked (GlcNAc...) asparagine" evidence="2">
    <location>
        <position position="275"/>
    </location>
</feature>
<feature type="glycosylation site" description="N-linked (GlcNAc...) asparagine" evidence="2">
    <location>
        <position position="335"/>
    </location>
</feature>
<feature type="glycosylation site" description="N-linked (GlcNAc...) asparagine" evidence="2">
    <location>
        <position position="451"/>
    </location>
</feature>
<feature type="glycosylation site" description="N-linked (GlcNAc...) asparagine" evidence="2">
    <location>
        <position position="539"/>
    </location>
</feature>
<feature type="glycosylation site" description="N-linked (GlcNAc...) asparagine" evidence="2">
    <location>
        <position position="561"/>
    </location>
</feature>
<feature type="sequence conflict" description="In Ref. 2; CAJ82077." evidence="4" ref="2">
    <original>L</original>
    <variation>F</variation>
    <location>
        <position position="441"/>
    </location>
</feature>
<accession>Q5NDE6</accession>
<accession>A4IIA6</accession>
<accession>Q28HA5</accession>
<dbReference type="EC" id="2.4.1.312" evidence="1"/>
<dbReference type="EMBL" id="AJ868538">
    <property type="protein sequence ID" value="CAI30872.1"/>
    <property type="molecule type" value="mRNA"/>
</dbReference>
<dbReference type="EMBL" id="CR760963">
    <property type="protein sequence ID" value="CAJ82077.1"/>
    <property type="molecule type" value="mRNA"/>
</dbReference>
<dbReference type="EMBL" id="BC135937">
    <property type="protein sequence ID" value="AAI35938.1"/>
    <property type="molecule type" value="mRNA"/>
</dbReference>
<dbReference type="RefSeq" id="NP_001011203.1">
    <property type="nucleotide sequence ID" value="NM_001011203.1"/>
</dbReference>
<dbReference type="RefSeq" id="XP_012820049.1">
    <property type="nucleotide sequence ID" value="XM_012964595.3"/>
</dbReference>
<dbReference type="RefSeq" id="XP_012820050.1">
    <property type="nucleotide sequence ID" value="XM_012964596.3"/>
</dbReference>
<dbReference type="RefSeq" id="XP_012820051.1">
    <property type="nucleotide sequence ID" value="XM_012964597.3"/>
</dbReference>
<dbReference type="RefSeq" id="XP_012820052.1">
    <property type="nucleotide sequence ID" value="XM_012964598.2"/>
</dbReference>
<dbReference type="RefSeq" id="XP_017950117.1">
    <property type="nucleotide sequence ID" value="XM_018094628.2"/>
</dbReference>
<dbReference type="RefSeq" id="XP_031759198.1">
    <property type="nucleotide sequence ID" value="XM_031903338.1"/>
</dbReference>
<dbReference type="SMR" id="Q5NDE6"/>
<dbReference type="FunCoup" id="Q5NDE6">
    <property type="interactions" value="613"/>
</dbReference>
<dbReference type="STRING" id="8364.ENSXETP00000003585"/>
<dbReference type="CAZy" id="GT61">
    <property type="family name" value="Glycosyltransferase Family 61"/>
</dbReference>
<dbReference type="GlyCosmos" id="Q5NDE6">
    <property type="glycosylation" value="6 sites, No reported glycans"/>
</dbReference>
<dbReference type="PaxDb" id="8364-ENSXETP00000047662"/>
<dbReference type="DNASU" id="496628"/>
<dbReference type="GeneID" id="496628"/>
<dbReference type="KEGG" id="xtr:496628"/>
<dbReference type="AGR" id="Xenbase:XB-GENE-973748"/>
<dbReference type="CTD" id="84892"/>
<dbReference type="Xenbase" id="XB-GENE-973748">
    <property type="gene designation" value="pomgnt2"/>
</dbReference>
<dbReference type="eggNOG" id="KOG4698">
    <property type="taxonomic scope" value="Eukaryota"/>
</dbReference>
<dbReference type="HOGENOM" id="CLU_020169_0_0_1"/>
<dbReference type="InParanoid" id="Q5NDE6"/>
<dbReference type="OMA" id="EFQMRVV"/>
<dbReference type="OrthoDB" id="529273at2759"/>
<dbReference type="PhylomeDB" id="Q5NDE6"/>
<dbReference type="TreeFam" id="TF332712"/>
<dbReference type="Reactome" id="R-XTR-5173105">
    <property type="pathway name" value="O-linked glycosylation"/>
</dbReference>
<dbReference type="UniPathway" id="UPA00378"/>
<dbReference type="Proteomes" id="UP000008143">
    <property type="component" value="Chromosome 6"/>
</dbReference>
<dbReference type="Bgee" id="ENSXETG00000022021">
    <property type="expression patterns" value="Expressed in egg cell and 12 other cell types or tissues"/>
</dbReference>
<dbReference type="GO" id="GO:0005783">
    <property type="term" value="C:endoplasmic reticulum"/>
    <property type="evidence" value="ECO:0000250"/>
    <property type="project" value="UniProtKB"/>
</dbReference>
<dbReference type="GO" id="GO:0005789">
    <property type="term" value="C:endoplasmic reticulum membrane"/>
    <property type="evidence" value="ECO:0007669"/>
    <property type="project" value="UniProtKB-SubCell"/>
</dbReference>
<dbReference type="GO" id="GO:0008375">
    <property type="term" value="F:acetylglucosaminyltransferase activity"/>
    <property type="evidence" value="ECO:0000250"/>
    <property type="project" value="UniProtKB"/>
</dbReference>
<dbReference type="GO" id="GO:0001764">
    <property type="term" value="P:neuron migration"/>
    <property type="evidence" value="ECO:0000250"/>
    <property type="project" value="UniProtKB"/>
</dbReference>
<dbReference type="GO" id="GO:0006493">
    <property type="term" value="P:protein O-linked glycosylation"/>
    <property type="evidence" value="ECO:0000250"/>
    <property type="project" value="UniProtKB"/>
</dbReference>
<dbReference type="GO" id="GO:0035269">
    <property type="term" value="P:protein O-linked mannosylation"/>
    <property type="evidence" value="ECO:0000250"/>
    <property type="project" value="UniProtKB"/>
</dbReference>
<dbReference type="InterPro" id="IPR003961">
    <property type="entry name" value="FN3_dom"/>
</dbReference>
<dbReference type="InterPro" id="IPR036116">
    <property type="entry name" value="FN3_sf"/>
</dbReference>
<dbReference type="InterPro" id="IPR049625">
    <property type="entry name" value="Glyco_transf_61_cat"/>
</dbReference>
<dbReference type="InterPro" id="IPR007657">
    <property type="entry name" value="Glycosyltransferase_61"/>
</dbReference>
<dbReference type="PANTHER" id="PTHR20961">
    <property type="entry name" value="GLYCOSYLTRANSFERASE"/>
    <property type="match status" value="1"/>
</dbReference>
<dbReference type="PANTHER" id="PTHR20961:SF38">
    <property type="entry name" value="PROTEIN O-LINKED-MANNOSE BETA-1,4-N-ACETYLGLUCOSAMINYLTRANSFERASE 2"/>
    <property type="match status" value="1"/>
</dbReference>
<dbReference type="Pfam" id="PF04577">
    <property type="entry name" value="Glyco_transf_61"/>
    <property type="match status" value="1"/>
</dbReference>
<dbReference type="SUPFAM" id="SSF49265">
    <property type="entry name" value="Fibronectin type III"/>
    <property type="match status" value="1"/>
</dbReference>
<dbReference type="PROSITE" id="PS50853">
    <property type="entry name" value="FN3"/>
    <property type="match status" value="1"/>
</dbReference>
<gene>
    <name type="primary">pomgnt2</name>
    <name type="synonym">ago61</name>
    <name type="synonym">gtdc2</name>
    <name type="ORF">TEgg056h10.1</name>
</gene>
<comment type="function">
    <text evidence="1">O-linked mannose beta-1,4-N-acetylglucosaminyltransferase that transfers UDP-N-acetyl-D-glucosamine to the 4-position of the mannose to generate N-acetyl-D-glucosamine-beta-1,4-O-D-mannosylprotein. Involved in the biosynthesis of the phosphorylated O-mannosyl trisaccharide (N-acetylgalactosamine-beta-3-N-acetylglucosamine-beta-4-(phosphate-6-)mannose), a carbohydrate structure present in alpha-dystroglycan (DAG1), which is required for binding laminin G-like domain-containing extracellular proteins with high affinity (By similarity).</text>
</comment>
<comment type="catalytic activity">
    <reaction evidence="1">
        <text>3-O-(alpha-D-mannosyl)-L-threonyl-[protein] + UDP-N-acetyl-alpha-D-glucosamine = 3-O-(N-acetyl-beta-D-glucosaminyl-(1-&gt;4)-alpha-D-mannosyl)-L-threonyl-[protein] + UDP + H(+)</text>
        <dbReference type="Rhea" id="RHEA:37663"/>
        <dbReference type="Rhea" id="RHEA-COMP:13547"/>
        <dbReference type="Rhea" id="RHEA-COMP:13618"/>
        <dbReference type="ChEBI" id="CHEBI:15378"/>
        <dbReference type="ChEBI" id="CHEBI:57705"/>
        <dbReference type="ChEBI" id="CHEBI:58223"/>
        <dbReference type="ChEBI" id="CHEBI:137323"/>
        <dbReference type="ChEBI" id="CHEBI:137540"/>
        <dbReference type="EC" id="2.4.1.312"/>
    </reaction>
</comment>
<comment type="pathway">
    <text evidence="1">Protein modification; protein glycosylation.</text>
</comment>
<comment type="subcellular location">
    <subcellularLocation>
        <location evidence="1">Endoplasmic reticulum membrane</location>
        <topology evidence="1">Single-pass type II membrane protein</topology>
    </subcellularLocation>
</comment>
<comment type="similarity">
    <text evidence="4">Belongs to the glycosyltransferase 61 family.</text>
</comment>
<organism>
    <name type="scientific">Xenopus tropicalis</name>
    <name type="common">Western clawed frog</name>
    <name type="synonym">Silurana tropicalis</name>
    <dbReference type="NCBI Taxonomy" id="8364"/>
    <lineage>
        <taxon>Eukaryota</taxon>
        <taxon>Metazoa</taxon>
        <taxon>Chordata</taxon>
        <taxon>Craniata</taxon>
        <taxon>Vertebrata</taxon>
        <taxon>Euteleostomi</taxon>
        <taxon>Amphibia</taxon>
        <taxon>Batrachia</taxon>
        <taxon>Anura</taxon>
        <taxon>Pipoidea</taxon>
        <taxon>Pipidae</taxon>
        <taxon>Xenopodinae</taxon>
        <taxon>Xenopus</taxon>
        <taxon>Silurana</taxon>
    </lineage>
</organism>
<protein>
    <recommendedName>
        <fullName>Protein O-linked-mannose beta-1,4-N-acetylglucosaminyltransferase 2</fullName>
        <shortName>POMGnT2</shortName>
        <ecNumber evidence="1">2.4.1.312</ecNumber>
    </recommendedName>
    <alternativeName>
        <fullName>Extracellular O-linked N-acetylglucosamine transferase-like</fullName>
    </alternativeName>
    <alternativeName>
        <fullName>Glycosyltransferase-like domain-containing protein 2</fullName>
    </alternativeName>
</protein>
<evidence type="ECO:0000250" key="1">
    <source>
        <dbReference type="UniProtKB" id="Q8NAT1"/>
    </source>
</evidence>
<evidence type="ECO:0000255" key="2"/>
<evidence type="ECO:0000255" key="3">
    <source>
        <dbReference type="PROSITE-ProRule" id="PRU00316"/>
    </source>
</evidence>
<evidence type="ECO:0000305" key="4"/>